<dbReference type="EMBL" id="AE016819">
    <property type="protein sequence ID" value="AAS53607.2"/>
    <property type="molecule type" value="Genomic_DNA"/>
</dbReference>
<dbReference type="RefSeq" id="NP_985783.2">
    <property type="nucleotide sequence ID" value="NM_211137.2"/>
</dbReference>
<dbReference type="SMR" id="Q753T9"/>
<dbReference type="FunCoup" id="Q753T9">
    <property type="interactions" value="561"/>
</dbReference>
<dbReference type="STRING" id="284811.Q753T9"/>
<dbReference type="GlyCosmos" id="Q753T9">
    <property type="glycosylation" value="1 site, No reported glycans"/>
</dbReference>
<dbReference type="EnsemblFungi" id="AAS53607">
    <property type="protein sequence ID" value="AAS53607"/>
    <property type="gene ID" value="AGOS_AFR236C"/>
</dbReference>
<dbReference type="GeneID" id="4622046"/>
<dbReference type="KEGG" id="ago:AGOS_AFR236C"/>
<dbReference type="eggNOG" id="KOG1444">
    <property type="taxonomic scope" value="Eukaryota"/>
</dbReference>
<dbReference type="HOGENOM" id="CLU_025360_1_2_1"/>
<dbReference type="InParanoid" id="Q753T9"/>
<dbReference type="OMA" id="VWMLINC"/>
<dbReference type="OrthoDB" id="417037at2759"/>
<dbReference type="Proteomes" id="UP000000591">
    <property type="component" value="Chromosome VI"/>
</dbReference>
<dbReference type="GO" id="GO:0030659">
    <property type="term" value="C:cytoplasmic vesicle membrane"/>
    <property type="evidence" value="ECO:0007669"/>
    <property type="project" value="UniProtKB-SubCell"/>
</dbReference>
<dbReference type="GO" id="GO:0005789">
    <property type="term" value="C:endoplasmic reticulum membrane"/>
    <property type="evidence" value="ECO:0007669"/>
    <property type="project" value="UniProtKB-SubCell"/>
</dbReference>
<dbReference type="GO" id="GO:0005794">
    <property type="term" value="C:Golgi apparatus"/>
    <property type="evidence" value="ECO:0000318"/>
    <property type="project" value="GO_Central"/>
</dbReference>
<dbReference type="GO" id="GO:0000139">
    <property type="term" value="C:Golgi membrane"/>
    <property type="evidence" value="ECO:0007669"/>
    <property type="project" value="UniProtKB-SubCell"/>
</dbReference>
<dbReference type="GO" id="GO:0015297">
    <property type="term" value="F:antiporter activity"/>
    <property type="evidence" value="ECO:0000318"/>
    <property type="project" value="GO_Central"/>
</dbReference>
<dbReference type="GO" id="GO:0005458">
    <property type="term" value="F:GDP-mannose transmembrane transporter activity"/>
    <property type="evidence" value="ECO:0000318"/>
    <property type="project" value="GO_Central"/>
</dbReference>
<dbReference type="GO" id="GO:1990570">
    <property type="term" value="P:GDP-mannose transmembrane transport"/>
    <property type="evidence" value="ECO:0000318"/>
    <property type="project" value="GO_Central"/>
</dbReference>
<dbReference type="InterPro" id="IPR013657">
    <property type="entry name" value="SCL35B1-4/HUT1"/>
</dbReference>
<dbReference type="InterPro" id="IPR050186">
    <property type="entry name" value="TPT_transporter"/>
</dbReference>
<dbReference type="NCBIfam" id="TIGR00803">
    <property type="entry name" value="nst"/>
    <property type="match status" value="1"/>
</dbReference>
<dbReference type="PANTHER" id="PTHR11132">
    <property type="entry name" value="SOLUTE CARRIER FAMILY 35"/>
    <property type="match status" value="1"/>
</dbReference>
<dbReference type="Pfam" id="PF08449">
    <property type="entry name" value="UAA"/>
    <property type="match status" value="1"/>
</dbReference>
<dbReference type="SUPFAM" id="SSF103481">
    <property type="entry name" value="Multidrug resistance efflux transporter EmrE"/>
    <property type="match status" value="2"/>
</dbReference>
<accession>Q753T9</accession>
<protein>
    <recommendedName>
        <fullName>GDP-mannose transporter</fullName>
        <shortName>GMT</shortName>
    </recommendedName>
</protein>
<sequence>MSELKVDTGRLSHIANSGPMSILAYCASSILMTVTNKCVVGSDKFNMLFVMLFAQSLVCVTALVLLKALGYVQYRPLNKVDVKNWLLISVLLVLMTYTSSRALKYLAVPIYTIFKNLTIILIAYGEVLFFGGRVTAMELSSFLLIVLSSVVATLGDQQALAKKPLAAAVESILGLNVGYFWMFTNCICSALFVLIMRKRIALTKFKDFDTMFYNNILSLPLLMLASFMFEDWGAANIARNLTKDYIIIMIISGLASVGISYCSGWCVRVTSSTTYSMVGALNKLPIALSGLLFFDAPKNFLSIFSIFLGFLSGIVYAVAKQKKQSQPAN</sequence>
<proteinExistence type="inferred from homology"/>
<keyword id="KW-0968">Cytoplasmic vesicle</keyword>
<keyword id="KW-0256">Endoplasmic reticulum</keyword>
<keyword id="KW-0325">Glycoprotein</keyword>
<keyword id="KW-0333">Golgi apparatus</keyword>
<keyword id="KW-0472">Membrane</keyword>
<keyword id="KW-1185">Reference proteome</keyword>
<keyword id="KW-0762">Sugar transport</keyword>
<keyword id="KW-0812">Transmembrane</keyword>
<keyword id="KW-1133">Transmembrane helix</keyword>
<keyword id="KW-0813">Transport</keyword>
<name>GMT_EREGS</name>
<feature type="chain" id="PRO_0000333507" description="GDP-mannose transporter">
    <location>
        <begin position="1"/>
        <end position="329"/>
    </location>
</feature>
<feature type="topological domain" description="Cytoplasmic" evidence="1">
    <location>
        <begin position="1"/>
        <end position="13"/>
    </location>
</feature>
<feature type="transmembrane region" description="Helical" evidence="2">
    <location>
        <begin position="14"/>
        <end position="34"/>
    </location>
</feature>
<feature type="topological domain" description="Lumenal" evidence="1">
    <location>
        <begin position="35"/>
        <end position="44"/>
    </location>
</feature>
<feature type="transmembrane region" description="Helical" evidence="2">
    <location>
        <begin position="45"/>
        <end position="65"/>
    </location>
</feature>
<feature type="topological domain" description="Cytoplasmic" evidence="1">
    <location>
        <begin position="66"/>
        <end position="79"/>
    </location>
</feature>
<feature type="transmembrane region" description="Helical" evidence="2">
    <location>
        <begin position="80"/>
        <end position="100"/>
    </location>
</feature>
<feature type="topological domain" description="Lumenal" evidence="1">
    <location>
        <begin position="101"/>
        <end position="109"/>
    </location>
</feature>
<feature type="transmembrane region" description="Helical" evidence="2">
    <location>
        <begin position="110"/>
        <end position="130"/>
    </location>
</feature>
<feature type="topological domain" description="Cytoplasmic" evidence="1">
    <location>
        <begin position="131"/>
        <end position="133"/>
    </location>
</feature>
<feature type="transmembrane region" description="Helical" evidence="2">
    <location>
        <begin position="134"/>
        <end position="154"/>
    </location>
</feature>
<feature type="topological domain" description="Lumenal" evidence="1">
    <location>
        <begin position="155"/>
        <end position="174"/>
    </location>
</feature>
<feature type="transmembrane region" description="Helical" evidence="2">
    <location>
        <begin position="175"/>
        <end position="195"/>
    </location>
</feature>
<feature type="topological domain" description="Cytoplasmic" evidence="1">
    <location>
        <begin position="196"/>
        <end position="214"/>
    </location>
</feature>
<feature type="transmembrane region" description="Helical" evidence="2">
    <location>
        <begin position="215"/>
        <end position="235"/>
    </location>
</feature>
<feature type="topological domain" description="Lumenal" evidence="1">
    <location>
        <begin position="236"/>
        <end position="245"/>
    </location>
</feature>
<feature type="transmembrane region" description="Helical" evidence="2">
    <location>
        <begin position="246"/>
        <end position="266"/>
    </location>
</feature>
<feature type="topological domain" description="Cytoplasmic" evidence="1">
    <location>
        <begin position="267"/>
        <end position="273"/>
    </location>
</feature>
<feature type="transmembrane region" description="Helical" evidence="2">
    <location>
        <begin position="274"/>
        <end position="294"/>
    </location>
</feature>
<feature type="topological domain" description="Lumenal" evidence="1">
    <location>
        <begin position="295"/>
        <end position="298"/>
    </location>
</feature>
<feature type="transmembrane region" description="Helical" evidence="2">
    <location>
        <begin position="299"/>
        <end position="319"/>
    </location>
</feature>
<feature type="topological domain" description="Cytoplasmic" evidence="1">
    <location>
        <begin position="320"/>
        <end position="329"/>
    </location>
</feature>
<feature type="glycosylation site" description="N-linked (GlcNAc...) asparagine" evidence="2">
    <location>
        <position position="240"/>
    </location>
</feature>
<comment type="function">
    <text evidence="1">Involved in the import of GDP-mannose from the cytoplasm into the Golgi lumen.</text>
</comment>
<comment type="subunit">
    <text evidence="1">Homooligomer.</text>
</comment>
<comment type="subcellular location">
    <subcellularLocation>
        <location evidence="1">Golgi apparatus membrane</location>
        <topology evidence="1">Multi-pass membrane protein</topology>
    </subcellularLocation>
    <subcellularLocation>
        <location evidence="1">Cytoplasmic vesicle membrane</location>
        <topology evidence="1">Multi-pass membrane protein</topology>
    </subcellularLocation>
    <subcellularLocation>
        <location evidence="1">Endoplasmic reticulum membrane</location>
        <topology evidence="1">Multi-pass membrane protein</topology>
    </subcellularLocation>
</comment>
<comment type="similarity">
    <text evidence="3">Belongs to the TPT transporter family. SLC35D subfamily.</text>
</comment>
<reference key="1">
    <citation type="journal article" date="2004" name="Science">
        <title>The Ashbya gossypii genome as a tool for mapping the ancient Saccharomyces cerevisiae genome.</title>
        <authorList>
            <person name="Dietrich F.S."/>
            <person name="Voegeli S."/>
            <person name="Brachat S."/>
            <person name="Lerch A."/>
            <person name="Gates K."/>
            <person name="Steiner S."/>
            <person name="Mohr C."/>
            <person name="Poehlmann R."/>
            <person name="Luedi P."/>
            <person name="Choi S."/>
            <person name="Wing R.A."/>
            <person name="Flavier A."/>
            <person name="Gaffney T.D."/>
            <person name="Philippsen P."/>
        </authorList>
    </citation>
    <scope>NUCLEOTIDE SEQUENCE [LARGE SCALE GENOMIC DNA]</scope>
    <source>
        <strain>ATCC 10895 / CBS 109.51 / FGSC 9923 / NRRL Y-1056</strain>
    </source>
</reference>
<reference key="2">
    <citation type="journal article" date="2013" name="G3 (Bethesda)">
        <title>Genomes of Ashbya fungi isolated from insects reveal four mating-type loci, numerous translocations, lack of transposons, and distinct gene duplications.</title>
        <authorList>
            <person name="Dietrich F.S."/>
            <person name="Voegeli S."/>
            <person name="Kuo S."/>
            <person name="Philippsen P."/>
        </authorList>
    </citation>
    <scope>GENOME REANNOTATION</scope>
    <scope>SEQUENCE REVISION TO 155 AND 161</scope>
    <source>
        <strain>ATCC 10895 / CBS 109.51 / FGSC 9923 / NRRL Y-1056</strain>
    </source>
</reference>
<gene>
    <name type="primary">VRG4</name>
    <name type="ordered locus">AFR236C</name>
</gene>
<evidence type="ECO:0000250" key="1"/>
<evidence type="ECO:0000255" key="2"/>
<evidence type="ECO:0000305" key="3"/>
<organism>
    <name type="scientific">Eremothecium gossypii (strain ATCC 10895 / CBS 109.51 / FGSC 9923 / NRRL Y-1056)</name>
    <name type="common">Yeast</name>
    <name type="synonym">Ashbya gossypii</name>
    <dbReference type="NCBI Taxonomy" id="284811"/>
    <lineage>
        <taxon>Eukaryota</taxon>
        <taxon>Fungi</taxon>
        <taxon>Dikarya</taxon>
        <taxon>Ascomycota</taxon>
        <taxon>Saccharomycotina</taxon>
        <taxon>Saccharomycetes</taxon>
        <taxon>Saccharomycetales</taxon>
        <taxon>Saccharomycetaceae</taxon>
        <taxon>Eremothecium</taxon>
    </lineage>
</organism>